<proteinExistence type="inferred from homology"/>
<dbReference type="EC" id="6.1.1.17" evidence="1"/>
<dbReference type="EMBL" id="CP000124">
    <property type="protein sequence ID" value="ABA47874.1"/>
    <property type="status" value="ALT_INIT"/>
    <property type="molecule type" value="Genomic_DNA"/>
</dbReference>
<dbReference type="RefSeq" id="WP_004532170.1">
    <property type="nucleotide sequence ID" value="NC_007434.1"/>
</dbReference>
<dbReference type="SMR" id="Q3JQY8"/>
<dbReference type="EnsemblBacteria" id="ABA47874">
    <property type="protein sequence ID" value="ABA47874"/>
    <property type="gene ID" value="BURPS1710b_2628"/>
</dbReference>
<dbReference type="GeneID" id="93060743"/>
<dbReference type="KEGG" id="bpm:BURPS1710b_2628"/>
<dbReference type="HOGENOM" id="CLU_015768_6_0_4"/>
<dbReference type="Proteomes" id="UP000002700">
    <property type="component" value="Chromosome I"/>
</dbReference>
<dbReference type="GO" id="GO:0005829">
    <property type="term" value="C:cytosol"/>
    <property type="evidence" value="ECO:0007669"/>
    <property type="project" value="TreeGrafter"/>
</dbReference>
<dbReference type="GO" id="GO:0005524">
    <property type="term" value="F:ATP binding"/>
    <property type="evidence" value="ECO:0007669"/>
    <property type="project" value="UniProtKB-UniRule"/>
</dbReference>
<dbReference type="GO" id="GO:0004818">
    <property type="term" value="F:glutamate-tRNA ligase activity"/>
    <property type="evidence" value="ECO:0007669"/>
    <property type="project" value="UniProtKB-UniRule"/>
</dbReference>
<dbReference type="GO" id="GO:0000049">
    <property type="term" value="F:tRNA binding"/>
    <property type="evidence" value="ECO:0007669"/>
    <property type="project" value="InterPro"/>
</dbReference>
<dbReference type="GO" id="GO:0008270">
    <property type="term" value="F:zinc ion binding"/>
    <property type="evidence" value="ECO:0007669"/>
    <property type="project" value="InterPro"/>
</dbReference>
<dbReference type="GO" id="GO:0006424">
    <property type="term" value="P:glutamyl-tRNA aminoacylation"/>
    <property type="evidence" value="ECO:0007669"/>
    <property type="project" value="UniProtKB-UniRule"/>
</dbReference>
<dbReference type="CDD" id="cd00808">
    <property type="entry name" value="GluRS_core"/>
    <property type="match status" value="1"/>
</dbReference>
<dbReference type="FunFam" id="3.40.50.620:FF:000007">
    <property type="entry name" value="Glutamate--tRNA ligase"/>
    <property type="match status" value="1"/>
</dbReference>
<dbReference type="Gene3D" id="1.10.10.350">
    <property type="match status" value="1"/>
</dbReference>
<dbReference type="Gene3D" id="1.10.8.70">
    <property type="entry name" value="Glutamate-tRNA synthetase, class I, anticodon-binding domain 1"/>
    <property type="match status" value="1"/>
</dbReference>
<dbReference type="Gene3D" id="3.40.50.620">
    <property type="entry name" value="HUPs"/>
    <property type="match status" value="1"/>
</dbReference>
<dbReference type="HAMAP" id="MF_00022">
    <property type="entry name" value="Glu_tRNA_synth_type1"/>
    <property type="match status" value="1"/>
</dbReference>
<dbReference type="InterPro" id="IPR045462">
    <property type="entry name" value="aa-tRNA-synth_I_cd-bd"/>
</dbReference>
<dbReference type="InterPro" id="IPR020751">
    <property type="entry name" value="aa-tRNA-synth_I_codon-bd_sub2"/>
</dbReference>
<dbReference type="InterPro" id="IPR001412">
    <property type="entry name" value="aa-tRNA-synth_I_CS"/>
</dbReference>
<dbReference type="InterPro" id="IPR008925">
    <property type="entry name" value="aa_tRNA-synth_I_cd-bd_sf"/>
</dbReference>
<dbReference type="InterPro" id="IPR004527">
    <property type="entry name" value="Glu-tRNA-ligase_bac/mito"/>
</dbReference>
<dbReference type="InterPro" id="IPR020752">
    <property type="entry name" value="Glu-tRNA-synth_I_codon-bd_sub1"/>
</dbReference>
<dbReference type="InterPro" id="IPR000924">
    <property type="entry name" value="Glu/Gln-tRNA-synth"/>
</dbReference>
<dbReference type="InterPro" id="IPR020058">
    <property type="entry name" value="Glu/Gln-tRNA-synth_Ib_cat-dom"/>
</dbReference>
<dbReference type="InterPro" id="IPR049940">
    <property type="entry name" value="GluQ/Sye"/>
</dbReference>
<dbReference type="InterPro" id="IPR033910">
    <property type="entry name" value="GluRS_core"/>
</dbReference>
<dbReference type="InterPro" id="IPR014729">
    <property type="entry name" value="Rossmann-like_a/b/a_fold"/>
</dbReference>
<dbReference type="NCBIfam" id="TIGR00464">
    <property type="entry name" value="gltX_bact"/>
    <property type="match status" value="1"/>
</dbReference>
<dbReference type="PANTHER" id="PTHR43311">
    <property type="entry name" value="GLUTAMATE--TRNA LIGASE"/>
    <property type="match status" value="1"/>
</dbReference>
<dbReference type="PANTHER" id="PTHR43311:SF2">
    <property type="entry name" value="GLUTAMATE--TRNA LIGASE, MITOCHONDRIAL-RELATED"/>
    <property type="match status" value="1"/>
</dbReference>
<dbReference type="Pfam" id="PF19269">
    <property type="entry name" value="Anticodon_2"/>
    <property type="match status" value="1"/>
</dbReference>
<dbReference type="Pfam" id="PF00749">
    <property type="entry name" value="tRNA-synt_1c"/>
    <property type="match status" value="1"/>
</dbReference>
<dbReference type="PRINTS" id="PR00987">
    <property type="entry name" value="TRNASYNTHGLU"/>
</dbReference>
<dbReference type="SUPFAM" id="SSF48163">
    <property type="entry name" value="An anticodon-binding domain of class I aminoacyl-tRNA synthetases"/>
    <property type="match status" value="1"/>
</dbReference>
<dbReference type="SUPFAM" id="SSF52374">
    <property type="entry name" value="Nucleotidylyl transferase"/>
    <property type="match status" value="1"/>
</dbReference>
<dbReference type="PROSITE" id="PS00178">
    <property type="entry name" value="AA_TRNA_LIGASE_I"/>
    <property type="match status" value="1"/>
</dbReference>
<protein>
    <recommendedName>
        <fullName evidence="1">Glutamate--tRNA ligase</fullName>
        <ecNumber evidence="1">6.1.1.17</ecNumber>
    </recommendedName>
    <alternativeName>
        <fullName evidence="1">Glutamyl-tRNA synthetase</fullName>
        <shortName evidence="1">GluRS</shortName>
    </alternativeName>
</protein>
<sequence>MTRPVRTRFAPSPTGFIHLGNIRSALYPWAFARKMKGTFVLRIEDTDLERSTEASVDAILEGMAWLGLDYDEGPYYQMQRMDRYREVLAQMLEKDLVYPCYMSTEELDALRERQRAAGEKPRYDGTWRPEPGKVLPEPPAGVTPVLRFRNPLTGSVVWDDAVKGRVEISNEELDDLVIARPDGTPTYNFCVVVDDLDMGITHVIRGDDHVNNTPRQINILRALGGEVPVYAHLPTVLNEQGEKMSKRHGAMSVMGYRDAGYLPEAVLNYLARLGWSHGDAEIFSREQFVEWFDLEHLGKSPAQYDHNKLNWLNNHYIKEADDARLAELAKPFFAALGIDADTIARGPDLVGVMGLMKDRASTVKEIAENSTMFYRAPAPDAQALAQHVTDAVRPALAEFAAALKTAEWTKEAIAAALKAVLGAHKLKMPQLAMPVRLLVAGTTHTPSIDAVLLLFGRDVVVSRLAAALA</sequence>
<comment type="function">
    <text evidence="1">Catalyzes the attachment of glutamate to tRNA(Glu) in a two-step reaction: glutamate is first activated by ATP to form Glu-AMP and then transferred to the acceptor end of tRNA(Glu).</text>
</comment>
<comment type="catalytic activity">
    <reaction evidence="1">
        <text>tRNA(Glu) + L-glutamate + ATP = L-glutamyl-tRNA(Glu) + AMP + diphosphate</text>
        <dbReference type="Rhea" id="RHEA:23540"/>
        <dbReference type="Rhea" id="RHEA-COMP:9663"/>
        <dbReference type="Rhea" id="RHEA-COMP:9680"/>
        <dbReference type="ChEBI" id="CHEBI:29985"/>
        <dbReference type="ChEBI" id="CHEBI:30616"/>
        <dbReference type="ChEBI" id="CHEBI:33019"/>
        <dbReference type="ChEBI" id="CHEBI:78442"/>
        <dbReference type="ChEBI" id="CHEBI:78520"/>
        <dbReference type="ChEBI" id="CHEBI:456215"/>
        <dbReference type="EC" id="6.1.1.17"/>
    </reaction>
</comment>
<comment type="subunit">
    <text evidence="1">Monomer.</text>
</comment>
<comment type="subcellular location">
    <subcellularLocation>
        <location evidence="1">Cytoplasm</location>
    </subcellularLocation>
</comment>
<comment type="similarity">
    <text evidence="1">Belongs to the class-I aminoacyl-tRNA synthetase family. Glutamate--tRNA ligase type 1 subfamily.</text>
</comment>
<comment type="sequence caution" evidence="3">
    <conflict type="erroneous initiation">
        <sequence resource="EMBL-CDS" id="ABA47874"/>
    </conflict>
</comment>
<name>SYE_BURP1</name>
<accession>Q3JQY8</accession>
<keyword id="KW-0030">Aminoacyl-tRNA synthetase</keyword>
<keyword id="KW-0067">ATP-binding</keyword>
<keyword id="KW-0963">Cytoplasm</keyword>
<keyword id="KW-0436">Ligase</keyword>
<keyword id="KW-0547">Nucleotide-binding</keyword>
<keyword id="KW-0648">Protein biosynthesis</keyword>
<organism>
    <name type="scientific">Burkholderia pseudomallei (strain 1710b)</name>
    <dbReference type="NCBI Taxonomy" id="320372"/>
    <lineage>
        <taxon>Bacteria</taxon>
        <taxon>Pseudomonadati</taxon>
        <taxon>Pseudomonadota</taxon>
        <taxon>Betaproteobacteria</taxon>
        <taxon>Burkholderiales</taxon>
        <taxon>Burkholderiaceae</taxon>
        <taxon>Burkholderia</taxon>
        <taxon>pseudomallei group</taxon>
    </lineage>
</organism>
<reference key="1">
    <citation type="journal article" date="2010" name="Genome Biol. Evol.">
        <title>Continuing evolution of Burkholderia mallei through genome reduction and large-scale rearrangements.</title>
        <authorList>
            <person name="Losada L."/>
            <person name="Ronning C.M."/>
            <person name="DeShazer D."/>
            <person name="Woods D."/>
            <person name="Fedorova N."/>
            <person name="Kim H.S."/>
            <person name="Shabalina S.A."/>
            <person name="Pearson T.R."/>
            <person name="Brinkac L."/>
            <person name="Tan P."/>
            <person name="Nandi T."/>
            <person name="Crabtree J."/>
            <person name="Badger J."/>
            <person name="Beckstrom-Sternberg S."/>
            <person name="Saqib M."/>
            <person name="Schutzer S.E."/>
            <person name="Keim P."/>
            <person name="Nierman W.C."/>
        </authorList>
    </citation>
    <scope>NUCLEOTIDE SEQUENCE [LARGE SCALE GENOMIC DNA]</scope>
    <source>
        <strain>1710b</strain>
    </source>
</reference>
<evidence type="ECO:0000255" key="1">
    <source>
        <dbReference type="HAMAP-Rule" id="MF_00022"/>
    </source>
</evidence>
<evidence type="ECO:0000256" key="2">
    <source>
        <dbReference type="SAM" id="MobiDB-lite"/>
    </source>
</evidence>
<evidence type="ECO:0000305" key="3"/>
<feature type="chain" id="PRO_0000237347" description="Glutamate--tRNA ligase">
    <location>
        <begin position="1"/>
        <end position="469"/>
    </location>
</feature>
<feature type="region of interest" description="Disordered" evidence="2">
    <location>
        <begin position="118"/>
        <end position="139"/>
    </location>
</feature>
<feature type="short sequence motif" description="'HIGH' region" evidence="1">
    <location>
        <begin position="11"/>
        <end position="21"/>
    </location>
</feature>
<feature type="short sequence motif" description="'KMSKS' region" evidence="1">
    <location>
        <begin position="243"/>
        <end position="247"/>
    </location>
</feature>
<feature type="compositionally biased region" description="Basic and acidic residues" evidence="2">
    <location>
        <begin position="118"/>
        <end position="131"/>
    </location>
</feature>
<feature type="binding site" evidence="1">
    <location>
        <position position="246"/>
    </location>
    <ligand>
        <name>ATP</name>
        <dbReference type="ChEBI" id="CHEBI:30616"/>
    </ligand>
</feature>
<gene>
    <name evidence="1" type="primary">gltX</name>
    <name type="ordered locus">BURPS1710b_2628</name>
</gene>